<protein>
    <recommendedName>
        <fullName evidence="5">Exopolyphosphatase 1</fullName>
        <shortName evidence="5">ExopolyPase 1</shortName>
        <ecNumber evidence="2">3.6.1.11</ecNumber>
    </recommendedName>
    <alternativeName>
        <fullName evidence="4">MTB-PPX1</fullName>
    </alternativeName>
</protein>
<name>PPX1_MYCTU</name>
<accession>P9WHV5</accession>
<accession>A7UC78</accession>
<accession>I6WYJ1</accession>
<accession>L0T3X7</accession>
<accession>P65786</accession>
<accession>Q11161</accession>
<reference key="1">
    <citation type="journal article" date="1998" name="Nature">
        <title>Deciphering the biology of Mycobacterium tuberculosis from the complete genome sequence.</title>
        <authorList>
            <person name="Cole S.T."/>
            <person name="Brosch R."/>
            <person name="Parkhill J."/>
            <person name="Garnier T."/>
            <person name="Churcher C.M."/>
            <person name="Harris D.E."/>
            <person name="Gordon S.V."/>
            <person name="Eiglmeier K."/>
            <person name="Gas S."/>
            <person name="Barry C.E. III"/>
            <person name="Tekaia F."/>
            <person name="Badcock K."/>
            <person name="Basham D."/>
            <person name="Brown D."/>
            <person name="Chillingworth T."/>
            <person name="Connor R."/>
            <person name="Davies R.M."/>
            <person name="Devlin K."/>
            <person name="Feltwell T."/>
            <person name="Gentles S."/>
            <person name="Hamlin N."/>
            <person name="Holroyd S."/>
            <person name="Hornsby T."/>
            <person name="Jagels K."/>
            <person name="Krogh A."/>
            <person name="McLean J."/>
            <person name="Moule S."/>
            <person name="Murphy L.D."/>
            <person name="Oliver S."/>
            <person name="Osborne J."/>
            <person name="Quail M.A."/>
            <person name="Rajandream M.A."/>
            <person name="Rogers J."/>
            <person name="Rutter S."/>
            <person name="Seeger K."/>
            <person name="Skelton S."/>
            <person name="Squares S."/>
            <person name="Squares R."/>
            <person name="Sulston J.E."/>
            <person name="Taylor K."/>
            <person name="Whitehead S."/>
            <person name="Barrell B.G."/>
        </authorList>
    </citation>
    <scope>NUCLEOTIDE SEQUENCE [LARGE SCALE GENOMIC DNA]</scope>
    <source>
        <strain>ATCC 25618 / H37Rv</strain>
    </source>
</reference>
<reference key="2">
    <citation type="journal article" date="2022" name="Genomics">
        <title>Deep N-terminomics of Mycobacterium tuberculosis H37Rv extensively correct annotated encoding genes.</title>
        <authorList>
            <person name="Shi J."/>
            <person name="Meng S."/>
            <person name="Wan L."/>
            <person name="Zhang Z."/>
            <person name="Jiang S."/>
            <person name="Zhu H."/>
            <person name="Dai E."/>
            <person name="Chang L."/>
            <person name="Gao H."/>
            <person name="Wan K."/>
            <person name="Zhang L."/>
            <person name="Zhao X."/>
            <person name="Liu H."/>
            <person name="Lyu Z."/>
            <person name="Zhang Y."/>
            <person name="Xu P."/>
        </authorList>
    </citation>
    <scope>PROTEIN SEQUENCE OF 3-22</scope>
    <scope>SEQUENCE REVISION TO N-TERMINUS</scope>
    <source>
        <strain>H37Rv</strain>
    </source>
</reference>
<reference key="3">
    <citation type="submission" date="2007-07" db="EMBL/GenBank/DDBJ databases">
        <title>Cloning and characterization of exopolyphosphatase gene from Mycobacterium tuberculosis H37Rv.</title>
        <authorList>
            <person name="Kim H.Y."/>
            <person name="Wook G.W."/>
        </authorList>
    </citation>
    <scope>NUCLEOTIDE SEQUENCE [GENOMIC DNA] OF 17-344</scope>
    <source>
        <strain>H37Rv</strain>
    </source>
</reference>
<reference key="4">
    <citation type="journal article" date="2011" name="Mol. Cell. Proteomics">
        <title>Proteogenomic analysis of Mycobacterium tuberculosis by high resolution mass spectrometry.</title>
        <authorList>
            <person name="Kelkar D.S."/>
            <person name="Kumar D."/>
            <person name="Kumar P."/>
            <person name="Balakrishnan L."/>
            <person name="Muthusamy B."/>
            <person name="Yadav A.K."/>
            <person name="Shrivastava P."/>
            <person name="Marimuthu A."/>
            <person name="Anand S."/>
            <person name="Sundaram H."/>
            <person name="Kingsbury R."/>
            <person name="Harsha H.C."/>
            <person name="Nair B."/>
            <person name="Prasad T.S."/>
            <person name="Chauhan D.S."/>
            <person name="Katoch K."/>
            <person name="Katoch V.M."/>
            <person name="Kumar P."/>
            <person name="Chaerkady R."/>
            <person name="Ramachandran S."/>
            <person name="Dash D."/>
            <person name="Pandey A."/>
        </authorList>
    </citation>
    <scope>IDENTIFICATION BY MASS SPECTROMETRY [LARGE SCALE ANALYSIS]</scope>
    <source>
        <strain>ATCC 25618 / H37Rv</strain>
    </source>
</reference>
<reference key="5">
    <citation type="journal article" date="2012" name="PLoS ONE">
        <title>The two PPX-GppA homologues from Mycobacterium tuberculosis have distinct biochemical activities.</title>
        <authorList>
            <person name="Choi M.Y."/>
            <person name="Wang Y."/>
            <person name="Wong L.L."/>
            <person name="Lu B.T."/>
            <person name="Chen W.Y."/>
            <person name="Huang J.D."/>
            <person name="Tanner J.A."/>
            <person name="Watt R.M."/>
        </authorList>
    </citation>
    <scope>FUNCTION</scope>
    <scope>CATALYTIC ACTIVITY</scope>
    <scope>COFACTOR</scope>
    <scope>ACTIVITY REGULATION</scope>
    <scope>BIOPHYSICOCHEMICAL PROPERTIES</scope>
    <scope>SUBUNIT</scope>
    <source>
        <strain>H37Rv</strain>
    </source>
</reference>
<dbReference type="EC" id="3.6.1.11" evidence="2"/>
<dbReference type="EMBL" id="AL123456">
    <property type="protein sequence ID" value="CCP43231.1"/>
    <property type="status" value="ALT_INIT"/>
    <property type="molecule type" value="Genomic_DNA"/>
</dbReference>
<dbReference type="EMBL" id="EU045359">
    <property type="protein sequence ID" value="ABS89148.1"/>
    <property type="molecule type" value="Genomic_DNA"/>
</dbReference>
<dbReference type="PIR" id="C70745">
    <property type="entry name" value="C70745"/>
</dbReference>
<dbReference type="RefSeq" id="NP_215010.3">
    <property type="nucleotide sequence ID" value="NC_000962.3"/>
</dbReference>
<dbReference type="RefSeq" id="WP_003402419.1">
    <property type="nucleotide sequence ID" value="NZ_NVQJ01000002.1"/>
</dbReference>
<dbReference type="RefSeq" id="WP_003900945.1">
    <property type="nucleotide sequence ID" value="NC_000962.3"/>
</dbReference>
<dbReference type="SMR" id="P9WHV5"/>
<dbReference type="STRING" id="83332.Rv0496"/>
<dbReference type="PaxDb" id="83332-Rv0496"/>
<dbReference type="DNASU" id="887234"/>
<dbReference type="GeneID" id="45424458"/>
<dbReference type="GeneID" id="887234"/>
<dbReference type="KEGG" id="mtu:Rv0496"/>
<dbReference type="PATRIC" id="fig|83332.111.peg.545"/>
<dbReference type="TubercuList" id="Rv0496"/>
<dbReference type="eggNOG" id="COG0248">
    <property type="taxonomic scope" value="Bacteria"/>
</dbReference>
<dbReference type="InParanoid" id="P9WHV5"/>
<dbReference type="OrthoDB" id="9793035at2"/>
<dbReference type="BRENDA" id="3.6.1.11">
    <property type="organism ID" value="3445"/>
</dbReference>
<dbReference type="Proteomes" id="UP000001584">
    <property type="component" value="Chromosome"/>
</dbReference>
<dbReference type="GO" id="GO:0004309">
    <property type="term" value="F:exopolyphosphatase activity"/>
    <property type="evidence" value="ECO:0007669"/>
    <property type="project" value="UniProtKB-EC"/>
</dbReference>
<dbReference type="GO" id="GO:0016462">
    <property type="term" value="F:pyrophosphatase activity"/>
    <property type="evidence" value="ECO:0000318"/>
    <property type="project" value="GO_Central"/>
</dbReference>
<dbReference type="CDD" id="cd24056">
    <property type="entry name" value="ASKHA_NBD_MtPPX1-like"/>
    <property type="match status" value="1"/>
</dbReference>
<dbReference type="FunFam" id="3.30.420.40:FF:000138">
    <property type="entry name" value="Exopolyphosphatase 1"/>
    <property type="match status" value="1"/>
</dbReference>
<dbReference type="FunFam" id="3.30.420.150:FF:000006">
    <property type="entry name" value="Ppx/GppA family phosphatase"/>
    <property type="match status" value="1"/>
</dbReference>
<dbReference type="Gene3D" id="3.30.420.40">
    <property type="match status" value="1"/>
</dbReference>
<dbReference type="Gene3D" id="3.30.420.150">
    <property type="entry name" value="Exopolyphosphatase. Domain 2"/>
    <property type="match status" value="1"/>
</dbReference>
<dbReference type="InterPro" id="IPR043129">
    <property type="entry name" value="ATPase_NBD"/>
</dbReference>
<dbReference type="InterPro" id="IPR050273">
    <property type="entry name" value="GppA/Ppx_hydrolase"/>
</dbReference>
<dbReference type="InterPro" id="IPR003695">
    <property type="entry name" value="Ppx_GppA_N"/>
</dbReference>
<dbReference type="PANTHER" id="PTHR30005">
    <property type="entry name" value="EXOPOLYPHOSPHATASE"/>
    <property type="match status" value="1"/>
</dbReference>
<dbReference type="PANTHER" id="PTHR30005:SF0">
    <property type="entry name" value="RETROGRADE REGULATION PROTEIN 2"/>
    <property type="match status" value="1"/>
</dbReference>
<dbReference type="Pfam" id="PF02541">
    <property type="entry name" value="Ppx-GppA"/>
    <property type="match status" value="1"/>
</dbReference>
<dbReference type="SUPFAM" id="SSF53067">
    <property type="entry name" value="Actin-like ATPase domain"/>
    <property type="match status" value="2"/>
</dbReference>
<evidence type="ECO:0000256" key="1">
    <source>
        <dbReference type="SAM" id="MobiDB-lite"/>
    </source>
</evidence>
<evidence type="ECO:0000269" key="2">
    <source>
    </source>
</evidence>
<evidence type="ECO:0000269" key="3">
    <source>
    </source>
</evidence>
<evidence type="ECO:0000303" key="4">
    <source>
    </source>
</evidence>
<evidence type="ECO:0000305" key="5"/>
<evidence type="ECO:0000305" key="6">
    <source>
    </source>
</evidence>
<comment type="function">
    <text evidence="2">Degradation of inorganic polyphosphates (polyP). Releases orthophosphate processively from the ends of the polyP chain. Prefers short-chain length polyphosphates as substrates. Can also hydrolyze ATP and ADP substrates, but lacks GTPase activity. Cannot hydrolyze pppGpp to ppGpp.</text>
</comment>
<comment type="catalytic activity">
    <reaction evidence="2">
        <text>[phosphate](n) + H2O = [phosphate](n-1) + phosphate + H(+)</text>
        <dbReference type="Rhea" id="RHEA:21528"/>
        <dbReference type="Rhea" id="RHEA-COMP:9859"/>
        <dbReference type="Rhea" id="RHEA-COMP:14279"/>
        <dbReference type="ChEBI" id="CHEBI:15377"/>
        <dbReference type="ChEBI" id="CHEBI:15378"/>
        <dbReference type="ChEBI" id="CHEBI:16838"/>
        <dbReference type="ChEBI" id="CHEBI:43474"/>
        <dbReference type="EC" id="3.6.1.11"/>
    </reaction>
</comment>
<comment type="cofactor">
    <cofactor evidence="2">
        <name>Mn(2+)</name>
        <dbReference type="ChEBI" id="CHEBI:29035"/>
    </cofactor>
    <text evidence="2">Can also use, to a lesser extent, Mg(2+) and Zn(2+).</text>
</comment>
<comment type="activity regulation">
    <text evidence="2">Exopolyphosphatase activity is inhibited by (p)ppGpp alarmones produced during the bacterial stringent response.</text>
</comment>
<comment type="biophysicochemical properties">
    <kinetics>
        <KM evidence="2">5.9 uM for polyP(14)</KM>
        <KM evidence="2">12.1 uM for polyP(60)</KM>
        <KM evidence="2">17.3 uM for polyP(130)</KM>
        <KM evidence="2">6.1 mM for ATP</KM>
        <Vmax evidence="2">11.0 umol/min/mg enzyme with polyP(14) as substrate</Vmax>
        <Vmax evidence="2">7.9 umol/min/mg enzyme with polyP(60) as substrate</Vmax>
        <Vmax evidence="2">6.6 umol/min/mg enzyme with polyP(130) as substrate</Vmax>
        <Vmax evidence="2">0.7 umol/min/mg enzyme with ATP as substrate</Vmax>
        <text evidence="2">kcat is 10.2 sec(-1) with polyP(14) as substrate. kcat is 7.3 sec(-1) with polyP(60) as substrate. kcat is 6.7 sec(-1) with polyP(130) as substrate. kcat is 1.9 sec(-1) with ATP as substrate.</text>
    </kinetics>
</comment>
<comment type="subunit">
    <text evidence="2">Homodimer.</text>
</comment>
<comment type="similarity">
    <text evidence="5">Belongs to the GppA/Ppx family.</text>
</comment>
<comment type="sequence caution" evidence="3">
    <conflict type="erroneous initiation">
        <sequence resource="EMBL-CDS" id="CCP43231"/>
    </conflict>
    <text>Truncated N-terminus.</text>
</comment>
<keyword id="KW-0903">Direct protein sequencing</keyword>
<keyword id="KW-0378">Hydrolase</keyword>
<keyword id="KW-0464">Manganese</keyword>
<keyword id="KW-1185">Reference proteome</keyword>
<proteinExistence type="evidence at protein level"/>
<gene>
    <name evidence="6" type="primary">ppx1</name>
    <name type="ordered locus">Rv0496</name>
    <name type="ORF">MTCY20G9.22</name>
</gene>
<feature type="chain" id="PRO_0000194307" description="Exopolyphosphatase 1">
    <location>
        <begin position="1"/>
        <end position="344"/>
    </location>
</feature>
<feature type="region of interest" description="Disordered" evidence="1">
    <location>
        <begin position="319"/>
        <end position="344"/>
    </location>
</feature>
<sequence>MRLGVLDVGSNTVHLLVVDAHRGGHPTPMSSTKATLRLAEATDSSGKITKRGADKLISTIDEFAKIAISSGCAELMAFATSAVRDAENSEDVLSRVRKETGVELQALRGEDESRLTFLAVRRWYGWSAGRILNLDIGGGSLEVSSGVDEEPEIALSLPLGAGRLTREWLPDDPPGRRRVAMLRDWLDAELAEPSVTVLEAGSPDLAVATSKTFRSLARLTGAAPSMAGPRVKRTLTANGLRQLIAFISRMTAVDRAELEGVSADRAPQIVAGALVAEASMRALSIEAVEICPWALREGLILRKLDSEADGTALIESSSVHTSVRAVGGQPADRNAANRSRGSKP</sequence>
<organism>
    <name type="scientific">Mycobacterium tuberculosis (strain ATCC 25618 / H37Rv)</name>
    <dbReference type="NCBI Taxonomy" id="83332"/>
    <lineage>
        <taxon>Bacteria</taxon>
        <taxon>Bacillati</taxon>
        <taxon>Actinomycetota</taxon>
        <taxon>Actinomycetes</taxon>
        <taxon>Mycobacteriales</taxon>
        <taxon>Mycobacteriaceae</taxon>
        <taxon>Mycobacterium</taxon>
        <taxon>Mycobacterium tuberculosis complex</taxon>
    </lineage>
</organism>